<comment type="function">
    <text evidence="1 6 7 8 9">E3 ubiquitin ligase required to protect genome stability in response to replication stress (PubMed:30842657, PubMed:30849395, PubMed:30979826). Acts as a key regulator of interstrand cross-link repair, which takes place when both strands of duplex DNA are covalently tethered together, thereby blocking replication and transcription (PubMed:30842657, PubMed:30849395, PubMed:30979826). Controls the choice between the two pathways of replication-coupled interstrand-cross-link repair by mediating ubiquitination of mcm7 subunit of the CMG helicase complex (PubMed:30842657). Short ubiquitin chains on mcm7 promote recruitment of DNA glycosylase neil3 (PubMed:30842657). If the interstrand cross-link cannot be cleaved by neil3, the ubiquitin chains continue to grow on mcm7, promoting the unloading of the CMG helicase complex by the vcp/p97 ATPase, enabling the Fanconi anemia DNA repair pathway (PubMed:30842657, PubMed:30979826). Only catalyzes ubiquitination of mcm7 when forks converge (PubMed:30842657). Also involved in the repair of covalent DNA-protein cross-links (DPCs) during DNA synthesis: promotes ubiquitination of DPCs, leading to their degradation by the proteasome (PubMed:30595436). Also acts as a negative regulator of innate immune signaling by inhibiting activation of NF-kappa-B mediated by TNF (By similarity).</text>
</comment>
<comment type="catalytic activity">
    <reaction evidence="7 9">
        <text>S-ubiquitinyl-[E2 ubiquitin-conjugating enzyme]-L-cysteine + [acceptor protein]-L-lysine = [E2 ubiquitin-conjugating enzyme]-L-cysteine + N(6)-ubiquitinyl-[acceptor protein]-L-lysine.</text>
        <dbReference type="EC" id="2.3.2.27"/>
    </reaction>
</comment>
<comment type="pathway">
    <text evidence="7 9">Protein modification; protein ubiquitination.</text>
</comment>
<comment type="subcellular location">
    <subcellularLocation>
        <location evidence="1">Nucleus</location>
        <location evidence="1">Nucleoplasm</location>
    </subcellularLocation>
    <subcellularLocation>
        <location evidence="1">Nucleus</location>
        <location evidence="1">Nucleolus</location>
    </subcellularLocation>
    <subcellularLocation>
        <location evidence="5 7 9">Chromosome</location>
    </subcellularLocation>
    <subcellularLocation>
        <location evidence="1">Cytoplasm</location>
    </subcellularLocation>
    <text evidence="5 7">Localizes to DNA damage sites in response to replication stress.</text>
</comment>
<comment type="similarity">
    <text evidence="11">Belongs to the TRAIP family.</text>
</comment>
<proteinExistence type="evidence at protein level"/>
<evidence type="ECO:0000250" key="1">
    <source>
        <dbReference type="UniProtKB" id="Q9BWF2"/>
    </source>
</evidence>
<evidence type="ECO:0000255" key="2"/>
<evidence type="ECO:0000255" key="3">
    <source>
        <dbReference type="PROSITE-ProRule" id="PRU00175"/>
    </source>
</evidence>
<evidence type="ECO:0000256" key="4">
    <source>
        <dbReference type="SAM" id="MobiDB-lite"/>
    </source>
</evidence>
<evidence type="ECO:0000269" key="5">
    <source>
    </source>
</evidence>
<evidence type="ECO:0000269" key="6">
    <source>
    </source>
</evidence>
<evidence type="ECO:0000269" key="7">
    <source>
    </source>
</evidence>
<evidence type="ECO:0000269" key="8">
    <source>
    </source>
</evidence>
<evidence type="ECO:0000269" key="9">
    <source>
    </source>
</evidence>
<evidence type="ECO:0000303" key="10">
    <source>
    </source>
</evidence>
<evidence type="ECO:0000305" key="11"/>
<evidence type="ECO:0000312" key="12">
    <source>
        <dbReference type="EMBL" id="AAH70612.1"/>
    </source>
</evidence>
<evidence type="ECO:0000312" key="13">
    <source>
        <dbReference type="EMBL" id="OCT85647.1"/>
    </source>
</evidence>
<evidence type="ECO:0000312" key="14">
    <source>
        <dbReference type="Proteomes" id="UP000186698"/>
    </source>
</evidence>
<organism>
    <name type="scientific">Xenopus laevis</name>
    <name type="common">African clawed frog</name>
    <dbReference type="NCBI Taxonomy" id="8355"/>
    <lineage>
        <taxon>Eukaryota</taxon>
        <taxon>Metazoa</taxon>
        <taxon>Chordata</taxon>
        <taxon>Craniata</taxon>
        <taxon>Vertebrata</taxon>
        <taxon>Euteleostomi</taxon>
        <taxon>Amphibia</taxon>
        <taxon>Batrachia</taxon>
        <taxon>Anura</taxon>
        <taxon>Pipoidea</taxon>
        <taxon>Pipidae</taxon>
        <taxon>Xenopodinae</taxon>
        <taxon>Xenopus</taxon>
        <taxon>Xenopus</taxon>
    </lineage>
</organism>
<gene>
    <name evidence="10" type="primary">traip</name>
    <name evidence="13" type="ORF">XELAEV_18023818mg</name>
</gene>
<feature type="chain" id="PRO_0000451420" description="E3 ubiquitin-protein ligase TRAIP">
    <location>
        <begin position="1"/>
        <end position="464"/>
    </location>
</feature>
<feature type="zinc finger region" description="RING-type; atypical" evidence="3">
    <location>
        <begin position="7"/>
        <end position="50"/>
    </location>
</feature>
<feature type="region of interest" description="Disordered" evidence="4">
    <location>
        <begin position="439"/>
        <end position="464"/>
    </location>
</feature>
<feature type="coiled-coil region" evidence="2">
    <location>
        <begin position="142"/>
        <end position="186"/>
    </location>
</feature>
<feature type="coiled-coil region" evidence="2">
    <location>
        <begin position="236"/>
        <end position="277"/>
    </location>
</feature>
<feature type="short sequence motif" description="PIP-box" evidence="7">
    <location>
        <begin position="456"/>
        <end position="464"/>
    </location>
</feature>
<feature type="mutagenesis site" description="Impaired ability to mediate ubiquitination of mcm7. Abolished ability to promote ubiquitination of covalent DNA-protein cross-links (DPCs)." evidence="6 7 8">
    <original>R</original>
    <variation>C</variation>
    <location>
        <position position="18"/>
    </location>
</feature>
<feature type="mutagenesis site" description="Abolished ability to mediate ubiquitination of mcm7." evidence="9">
    <original>C</original>
    <variation>A</variation>
    <location>
        <position position="25"/>
    </location>
</feature>
<feature type="mutagenesis site" description="Does not affect ability to mediate ubiquitination of mcm7." evidence="7 8">
    <location>
        <begin position="456"/>
        <end position="464"/>
    </location>
</feature>
<feature type="sequence conflict" description="In Ref. 1; AAH70612." ref="1">
    <original>A</original>
    <variation>T</variation>
    <location>
        <position position="17"/>
    </location>
</feature>
<dbReference type="EC" id="2.3.2.27" evidence="7 9"/>
<dbReference type="EMBL" id="CM004472">
    <property type="protein sequence ID" value="OCT85647.1"/>
    <property type="molecule type" value="Genomic_DNA"/>
</dbReference>
<dbReference type="EMBL" id="BC070612">
    <property type="protein sequence ID" value="AAH70612.1"/>
    <property type="molecule type" value="mRNA"/>
</dbReference>
<dbReference type="RefSeq" id="NP_001084838.1">
    <property type="nucleotide sequence ID" value="NM_001091369.1"/>
</dbReference>
<dbReference type="SMR" id="Q6NRV0"/>
<dbReference type="STRING" id="8355.A0A1L8GP65"/>
<dbReference type="PaxDb" id="8355-A0A1L8GP65"/>
<dbReference type="DNASU" id="431884"/>
<dbReference type="GeneID" id="431884"/>
<dbReference type="KEGG" id="xla:431884"/>
<dbReference type="AGR" id="Xenbase:XB-GENE-922331"/>
<dbReference type="CTD" id="431884"/>
<dbReference type="Xenbase" id="XB-GENE-922331">
    <property type="gene designation" value="traip.L"/>
</dbReference>
<dbReference type="OMA" id="RSKYIQP"/>
<dbReference type="OrthoDB" id="8062037at2759"/>
<dbReference type="UniPathway" id="UPA00143"/>
<dbReference type="Proteomes" id="UP000186698">
    <property type="component" value="Chromosome 4L"/>
</dbReference>
<dbReference type="Proteomes" id="UP000694892">
    <property type="component" value="Chromosome 4L"/>
</dbReference>
<dbReference type="Bgee" id="431884">
    <property type="expression patterns" value="Expressed in egg cell and 19 other cell types or tissues"/>
</dbReference>
<dbReference type="GO" id="GO:0005737">
    <property type="term" value="C:cytoplasm"/>
    <property type="evidence" value="ECO:0007669"/>
    <property type="project" value="UniProtKB-SubCell"/>
</dbReference>
<dbReference type="GO" id="GO:0005730">
    <property type="term" value="C:nucleolus"/>
    <property type="evidence" value="ECO:0000250"/>
    <property type="project" value="UniProtKB"/>
</dbReference>
<dbReference type="GO" id="GO:0005654">
    <property type="term" value="C:nucleoplasm"/>
    <property type="evidence" value="ECO:0000250"/>
    <property type="project" value="UniProtKB"/>
</dbReference>
<dbReference type="GO" id="GO:0005634">
    <property type="term" value="C:nucleus"/>
    <property type="evidence" value="ECO:0000318"/>
    <property type="project" value="GO_Central"/>
</dbReference>
<dbReference type="GO" id="GO:0090734">
    <property type="term" value="C:site of DNA damage"/>
    <property type="evidence" value="ECO:0000250"/>
    <property type="project" value="UniProtKB"/>
</dbReference>
<dbReference type="GO" id="GO:1904931">
    <property type="term" value="F:MCM complex binding"/>
    <property type="evidence" value="ECO:0000314"/>
    <property type="project" value="UniProtKB"/>
</dbReference>
<dbReference type="GO" id="GO:0061630">
    <property type="term" value="F:ubiquitin protein ligase activity"/>
    <property type="evidence" value="ECO:0000318"/>
    <property type="project" value="GO_Central"/>
</dbReference>
<dbReference type="GO" id="GO:0004842">
    <property type="term" value="F:ubiquitin-protein transferase activity"/>
    <property type="evidence" value="ECO:0000314"/>
    <property type="project" value="UniProtKB"/>
</dbReference>
<dbReference type="GO" id="GO:0008270">
    <property type="term" value="F:zinc ion binding"/>
    <property type="evidence" value="ECO:0007669"/>
    <property type="project" value="UniProtKB-KW"/>
</dbReference>
<dbReference type="GO" id="GO:0006974">
    <property type="term" value="P:DNA damage response"/>
    <property type="evidence" value="ECO:0000314"/>
    <property type="project" value="UniProtKB"/>
</dbReference>
<dbReference type="GO" id="GO:0006281">
    <property type="term" value="P:DNA repair"/>
    <property type="evidence" value="ECO:0000314"/>
    <property type="project" value="UniProtKB"/>
</dbReference>
<dbReference type="GO" id="GO:0036297">
    <property type="term" value="P:interstrand cross-link repair"/>
    <property type="evidence" value="ECO:0000314"/>
    <property type="project" value="UniProtKB"/>
</dbReference>
<dbReference type="GO" id="GO:0016567">
    <property type="term" value="P:protein ubiquitination"/>
    <property type="evidence" value="ECO:0000314"/>
    <property type="project" value="UniProtKB"/>
</dbReference>
<dbReference type="GO" id="GO:0106300">
    <property type="term" value="P:protein-DNA covalent cross-linking repair"/>
    <property type="evidence" value="ECO:0000315"/>
    <property type="project" value="UniProtKB"/>
</dbReference>
<dbReference type="GO" id="GO:0031297">
    <property type="term" value="P:replication fork processing"/>
    <property type="evidence" value="ECO:0000318"/>
    <property type="project" value="GO_Central"/>
</dbReference>
<dbReference type="CDD" id="cd16480">
    <property type="entry name" value="RING-H2_TRAIP"/>
    <property type="match status" value="1"/>
</dbReference>
<dbReference type="Gene3D" id="3.30.40.10">
    <property type="entry name" value="Zinc/RING finger domain, C3HC4 (zinc finger)"/>
    <property type="match status" value="1"/>
</dbReference>
<dbReference type="InterPro" id="IPR052639">
    <property type="entry name" value="TRAIP_ubiq-protein_ligase"/>
</dbReference>
<dbReference type="InterPro" id="IPR001841">
    <property type="entry name" value="Znf_RING"/>
</dbReference>
<dbReference type="InterPro" id="IPR013083">
    <property type="entry name" value="Znf_RING/FYVE/PHD"/>
</dbReference>
<dbReference type="PANTHER" id="PTHR46569:SF1">
    <property type="entry name" value="E3 UBIQUITIN-PROTEIN LIGASE RFWD3-RELATED"/>
    <property type="match status" value="1"/>
</dbReference>
<dbReference type="PANTHER" id="PTHR46569">
    <property type="entry name" value="E3 UBIQUITIN-PROTEIN LIGASE TRAIP"/>
    <property type="match status" value="1"/>
</dbReference>
<dbReference type="Pfam" id="PF13639">
    <property type="entry name" value="zf-RING_2"/>
    <property type="match status" value="1"/>
</dbReference>
<dbReference type="SMART" id="SM00184">
    <property type="entry name" value="RING"/>
    <property type="match status" value="1"/>
</dbReference>
<dbReference type="SUPFAM" id="SSF46579">
    <property type="entry name" value="Prefoldin"/>
    <property type="match status" value="1"/>
</dbReference>
<dbReference type="SUPFAM" id="SSF57850">
    <property type="entry name" value="RING/U-box"/>
    <property type="match status" value="1"/>
</dbReference>
<dbReference type="PROSITE" id="PS50089">
    <property type="entry name" value="ZF_RING_2"/>
    <property type="match status" value="1"/>
</dbReference>
<reference key="1">
    <citation type="submission" date="2004-05" db="EMBL/GenBank/DDBJ databases">
        <authorList>
            <consortium name="NIH - Xenopus Gene Collection (XGC) project"/>
        </authorList>
    </citation>
    <scope>NUCLEOTIDE SEQUENCE [LARGE SCALE MRNA]</scope>
    <source>
        <tissue evidence="12">Embryo</tissue>
    </source>
</reference>
<reference evidence="14" key="2">
    <citation type="journal article" date="2016" name="Nature">
        <title>Genome evolution in the allotetraploid frog Xenopus laevis.</title>
        <authorList>
            <person name="Session A.M."/>
            <person name="Uno Y."/>
            <person name="Kwon T."/>
            <person name="Chapman J.A."/>
            <person name="Toyoda A."/>
            <person name="Takahashi S."/>
            <person name="Fukui A."/>
            <person name="Hikosaka A."/>
            <person name="Suzuki A."/>
            <person name="Kondo M."/>
            <person name="van Heeringen S.J."/>
            <person name="Quigley I."/>
            <person name="Heinz S."/>
            <person name="Ogino H."/>
            <person name="Ochi H."/>
            <person name="Hellsten U."/>
            <person name="Lyons J.B."/>
            <person name="Simakov O."/>
            <person name="Putnam N."/>
            <person name="Stites J."/>
            <person name="Kuroki Y."/>
            <person name="Tanaka T."/>
            <person name="Michiue T."/>
            <person name="Watanabe M."/>
            <person name="Bogdanovic O."/>
            <person name="Lister R."/>
            <person name="Georgiou G."/>
            <person name="Paranjpe S.S."/>
            <person name="van Kruijsbergen I."/>
            <person name="Shu S."/>
            <person name="Carlson J."/>
            <person name="Kinoshita T."/>
            <person name="Ohta Y."/>
            <person name="Mawaribuchi S."/>
            <person name="Jenkins J."/>
            <person name="Grimwood J."/>
            <person name="Schmutz J."/>
            <person name="Mitros T."/>
            <person name="Mozaffari S.V."/>
            <person name="Suzuki Y."/>
            <person name="Haramoto Y."/>
            <person name="Yamamoto T.S."/>
            <person name="Takagi C."/>
            <person name="Heald R."/>
            <person name="Miller K."/>
            <person name="Haudenschild C."/>
            <person name="Kitzman J."/>
            <person name="Nakayama T."/>
            <person name="Izutsu Y."/>
            <person name="Robert J."/>
            <person name="Fortriede J."/>
            <person name="Burns K."/>
            <person name="Lotay V."/>
            <person name="Karimi K."/>
            <person name="Yasuoka Y."/>
            <person name="Dichmann D.S."/>
            <person name="Flajnik M.F."/>
            <person name="Houston D.W."/>
            <person name="Shendure J."/>
            <person name="DuPasquier L."/>
            <person name="Vize P.D."/>
            <person name="Zorn A.M."/>
            <person name="Ito M."/>
            <person name="Marcotte E.M."/>
            <person name="Wallingford J.B."/>
            <person name="Ito Y."/>
            <person name="Asashima M."/>
            <person name="Ueno N."/>
            <person name="Matsuda Y."/>
            <person name="Veenstra G.J."/>
            <person name="Fujiyama A."/>
            <person name="Harland R.M."/>
            <person name="Taira M."/>
            <person name="Rokhsar D.S."/>
        </authorList>
    </citation>
    <scope>NUCLEOTIDE SEQUENCE [LARGE SCALE GENOMIC DNA]</scope>
    <source>
        <strain>J</strain>
    </source>
</reference>
<reference key="3">
    <citation type="journal article" date="2016" name="J. Cell Biol.">
        <title>TRAIP is a PCNA-binding ubiquitin ligase that protects genome stability after replication stress.</title>
        <authorList>
            <person name="Hoffmann S."/>
            <person name="Smedegaard S."/>
            <person name="Nakamura K."/>
            <person name="Mortuza G.B."/>
            <person name="Raschle M."/>
            <person name="Ibanez de Opakua A."/>
            <person name="Oka Y."/>
            <person name="Feng Y."/>
            <person name="Blanco F.J."/>
            <person name="Mann M."/>
            <person name="Montoya G."/>
            <person name="Groth A."/>
            <person name="Bekker-Jensen S."/>
            <person name="Mailand N."/>
        </authorList>
    </citation>
    <scope>SUBCELLULAR LOCATION</scope>
</reference>
<reference key="4">
    <citation type="journal article" date="2019" name="Life. Sci Alliance">
        <title>Mitotic replisome disassembly depends on TRAIP ubiquitin ligase activity.</title>
        <authorList>
            <person name="Priego Moreno S."/>
            <person name="Jones R.M."/>
            <person name="Poovathumkadavil D."/>
            <person name="Scaramuzza S."/>
            <person name="Gambus A."/>
        </authorList>
    </citation>
    <scope>FUNCTION</scope>
    <scope>CATALYTIC ACTIVITY</scope>
    <scope>MUTAGENESIS OF CYS-25</scope>
</reference>
<reference key="5">
    <citation type="journal article" date="2019" name="Mol. Cell">
        <title>Mitotic CDK Promotes replisome disassembly, fork breakage, and complex DNA rearrangements.</title>
        <authorList>
            <person name="Deng L."/>
            <person name="Wu R.A."/>
            <person name="Sonneville R."/>
            <person name="Kochenova O.V."/>
            <person name="Labib K."/>
            <person name="Pellman D."/>
            <person name="Walter J.C."/>
        </authorList>
    </citation>
    <scope>FUNCTION</scope>
    <scope>MUTAGENESIS OF ARG-18 AND 456-GLN--LYS-464</scope>
</reference>
<reference key="6">
    <citation type="journal article" date="2019" name="Nature">
        <title>TRAIP is a master regulator of DNA interstrand crosslink repair.</title>
        <authorList>
            <person name="Wu R.A."/>
            <person name="Semlow D.R."/>
            <person name="Kamimae-Lanning A.N."/>
            <person name="Kochenova O.V."/>
            <person name="Chistol G."/>
            <person name="Hodskinson M.R."/>
            <person name="Amunugama R."/>
            <person name="Sparks J.L."/>
            <person name="Wang M."/>
            <person name="Deng L."/>
            <person name="Mimoso C.A."/>
            <person name="Low E."/>
            <person name="Patel K.J."/>
            <person name="Walter J.C."/>
        </authorList>
    </citation>
    <scope>FUNCTION</scope>
    <scope>SUBCELLULAR LOCATION</scope>
    <scope>MUTAGENESIS OF ARG-18 AND 456-GLN--LYS-464</scope>
</reference>
<reference key="7">
    <citation type="journal article" date="2019" name="Mol. Cell">
        <title>Replication-coupled DNA-protein crosslink repair by SPRTN and the proteasome in Xenopus egg extracts.</title>
        <authorList>
            <person name="Larsen N.B."/>
            <person name="Gao A.O."/>
            <person name="Sparks J.L."/>
            <person name="Gallina I."/>
            <person name="Wu R.A."/>
            <person name="Mann M."/>
            <person name="Raeschle M."/>
            <person name="Walter J.C."/>
            <person name="Duxin J.P."/>
        </authorList>
    </citation>
    <scope>FUNCTION</scope>
    <scope>MUTAGENESIS OF ARG-18</scope>
</reference>
<protein>
    <recommendedName>
        <fullName evidence="11">E3 ubiquitin-protein ligase TRAIP</fullName>
        <ecNumber evidence="7 9">2.3.2.27</ecNumber>
    </recommendedName>
    <alternativeName>
        <fullName evidence="10">TRAF-interacting protein</fullName>
    </alternativeName>
</protein>
<accession>Q6NRV0</accession>
<accession>A0A1L8GP65</accession>
<sequence length="464" mass="52589">MPIRAYCTICSDFFDNARDVAAITCGHTFHQECLLQWFHSAPHRTCPQCRIQVSSRQIINKLFFDIGGEEETVLDAESLKNEVDRIKASLLVKEKEKRECQGLVDSLREMLDVRNVTIQSQQKELGDMEMLCSTLKKQIKFLDKQQSETKAAKDEARKLRNKLKTMESIEVLLQSQRSEVEEMIRDMGSGQAAVEQLAIYCVSLKKEYENLKEVRKSSAEMTEKLRKELFSSNHKAQKAELELTKVREELSASQKELHSADKEIMSLKKKVEFLQKTLTTPTASNEAISRLIFESPAPIGLERPKLRPPMMGNDINLDVTFDIDTPEHNTQKSVVAPFKKMKFDNKEHPLSSPTKNPLQESKGLMSWAGGRTGADEDDDLTLPSFIKNSLLHKKPVGSLLGLRQNTGAVRTGFDGLGGRTKFIQPSNLTEIRPLHQKMKRKKVSRPTACTSSLANQPRLEDFLK</sequence>
<name>TRAIP_XENLA</name>
<keyword id="KW-0158">Chromosome</keyword>
<keyword id="KW-0175">Coiled coil</keyword>
<keyword id="KW-0963">Cytoplasm</keyword>
<keyword id="KW-0227">DNA damage</keyword>
<keyword id="KW-0234">DNA repair</keyword>
<keyword id="KW-0479">Metal-binding</keyword>
<keyword id="KW-0539">Nucleus</keyword>
<keyword id="KW-1185">Reference proteome</keyword>
<keyword id="KW-0677">Repeat</keyword>
<keyword id="KW-0808">Transferase</keyword>
<keyword id="KW-0833">Ubl conjugation pathway</keyword>
<keyword id="KW-0862">Zinc</keyword>
<keyword id="KW-0863">Zinc-finger</keyword>